<organism>
    <name type="scientific">Encephalitozoon cuniculi (strain GB-M1)</name>
    <name type="common">Microsporidian parasite</name>
    <dbReference type="NCBI Taxonomy" id="284813"/>
    <lineage>
        <taxon>Eukaryota</taxon>
        <taxon>Fungi</taxon>
        <taxon>Fungi incertae sedis</taxon>
        <taxon>Microsporidia</taxon>
        <taxon>Unikaryonidae</taxon>
        <taxon>Encephalitozoon</taxon>
    </lineage>
</organism>
<protein>
    <recommendedName>
        <fullName>Uncharacterized RING finger protein ECU07_0330</fullName>
    </recommendedName>
</protein>
<evidence type="ECO:0000255" key="1">
    <source>
        <dbReference type="PROSITE-ProRule" id="PRU00175"/>
    </source>
</evidence>
<evidence type="ECO:0000256" key="2">
    <source>
        <dbReference type="SAM" id="MobiDB-lite"/>
    </source>
</evidence>
<name>Y733_ENCCU</name>
<accession>Q8SV35</accession>
<reference key="1">
    <citation type="journal article" date="2001" name="Nature">
        <title>Genome sequence and gene compaction of the eukaryote parasite Encephalitozoon cuniculi.</title>
        <authorList>
            <person name="Katinka M.D."/>
            <person name="Duprat S."/>
            <person name="Cornillot E."/>
            <person name="Metenier G."/>
            <person name="Thomarat F."/>
            <person name="Prensier G."/>
            <person name="Barbe V."/>
            <person name="Peyretaillade E."/>
            <person name="Brottier P."/>
            <person name="Wincker P."/>
            <person name="Delbac F."/>
            <person name="El Alaoui H."/>
            <person name="Peyret P."/>
            <person name="Saurin W."/>
            <person name="Gouy M."/>
            <person name="Weissenbach J."/>
            <person name="Vivares C.P."/>
        </authorList>
    </citation>
    <scope>NUCLEOTIDE SEQUENCE [LARGE SCALE GENOMIC DNA]</scope>
    <source>
        <strain>GB-M1</strain>
    </source>
</reference>
<reference key="2">
    <citation type="journal article" date="2009" name="BMC Genomics">
        <title>Identification of transcriptional signals in Encephalitozoon cuniculi widespread among Microsporidia phylum: support for accurate structural genome annotation.</title>
        <authorList>
            <person name="Peyretaillade E."/>
            <person name="Goncalves O."/>
            <person name="Terrat S."/>
            <person name="Dugat-Bony E."/>
            <person name="Wincker P."/>
            <person name="Cornman R.S."/>
            <person name="Evans J.D."/>
            <person name="Delbac F."/>
            <person name="Peyret P."/>
        </authorList>
    </citation>
    <scope>GENOME REANNOTATION</scope>
    <source>
        <strain>GB-M1</strain>
    </source>
</reference>
<gene>
    <name type="ordered locus">ECU07_0330</name>
</gene>
<proteinExistence type="predicted"/>
<feature type="chain" id="PRO_0000388421" description="Uncharacterized RING finger protein ECU07_0330">
    <location>
        <begin position="1"/>
        <end position="305"/>
    </location>
</feature>
<feature type="zinc finger region" description="RING-type; atypical" evidence="1">
    <location>
        <begin position="260"/>
        <end position="302"/>
    </location>
</feature>
<feature type="region of interest" description="Disordered" evidence="2">
    <location>
        <begin position="53"/>
        <end position="185"/>
    </location>
</feature>
<feature type="compositionally biased region" description="Basic and acidic residues" evidence="2">
    <location>
        <begin position="95"/>
        <end position="116"/>
    </location>
</feature>
<feature type="compositionally biased region" description="Basic and acidic residues" evidence="2">
    <location>
        <begin position="128"/>
        <end position="142"/>
    </location>
</feature>
<feature type="compositionally biased region" description="Polar residues" evidence="2">
    <location>
        <begin position="161"/>
        <end position="171"/>
    </location>
</feature>
<keyword id="KW-0479">Metal-binding</keyword>
<keyword id="KW-1185">Reference proteome</keyword>
<keyword id="KW-0862">Zinc</keyword>
<keyword id="KW-0863">Zinc-finger</keyword>
<sequence length="305" mass="34056">MARRNGNNNFLNIMRSMLSFLDTRIESSDIDASNTPGGVFMNRLRSRLVDLISGRIGDGDDGREDDETRAPPPGRDLRGRGRKVRGSARQEVPSVEERNLVDRCNRMMNETEERPTRERRRTRAVSRGSERNGETERPRSEGVEDPVTLTTSIVVTGDGLGNTQAPSQSAEAQDETGPRSSRTVGSRGFRVVFPRIPSQELRFLFLTPQSEGSRGNIIYEIQINFDVFEASSEAPTTATKESLKKSSIVRAVEADKGCECAICMSNFIKNQRLRVLPCDHRFHVGCVDKWLLGHSNKCPVCRTAI</sequence>
<dbReference type="EMBL" id="AL590447">
    <property type="protein sequence ID" value="CAD25565.2"/>
    <property type="molecule type" value="Genomic_DNA"/>
</dbReference>
<dbReference type="RefSeq" id="NP_585961.2">
    <property type="nucleotide sequence ID" value="NM_001041583.2"/>
</dbReference>
<dbReference type="SMR" id="Q8SV35"/>
<dbReference type="STRING" id="284813.Q8SV35"/>
<dbReference type="GeneID" id="859390"/>
<dbReference type="KEGG" id="ecu:ECU07_0330"/>
<dbReference type="VEuPathDB" id="MicrosporidiaDB:ECU07_0330"/>
<dbReference type="HOGENOM" id="CLU_912244_0_0_1"/>
<dbReference type="InParanoid" id="Q8SV35"/>
<dbReference type="OrthoDB" id="2193062at2759"/>
<dbReference type="Proteomes" id="UP000000819">
    <property type="component" value="Chromosome VII"/>
</dbReference>
<dbReference type="GO" id="GO:0061630">
    <property type="term" value="F:ubiquitin protein ligase activity"/>
    <property type="evidence" value="ECO:0007669"/>
    <property type="project" value="TreeGrafter"/>
</dbReference>
<dbReference type="GO" id="GO:0008270">
    <property type="term" value="F:zinc ion binding"/>
    <property type="evidence" value="ECO:0007669"/>
    <property type="project" value="UniProtKB-KW"/>
</dbReference>
<dbReference type="GO" id="GO:0006511">
    <property type="term" value="P:ubiquitin-dependent protein catabolic process"/>
    <property type="evidence" value="ECO:0007669"/>
    <property type="project" value="TreeGrafter"/>
</dbReference>
<dbReference type="CDD" id="cd16473">
    <property type="entry name" value="RING-H2_RNF103"/>
    <property type="match status" value="1"/>
</dbReference>
<dbReference type="Gene3D" id="3.30.40.10">
    <property type="entry name" value="Zinc/RING finger domain, C3HC4 (zinc finger)"/>
    <property type="match status" value="1"/>
</dbReference>
<dbReference type="InterPro" id="IPR051826">
    <property type="entry name" value="E3_ubiquitin-ligase_domain"/>
</dbReference>
<dbReference type="InterPro" id="IPR001841">
    <property type="entry name" value="Znf_RING"/>
</dbReference>
<dbReference type="InterPro" id="IPR013083">
    <property type="entry name" value="Znf_RING/FYVE/PHD"/>
</dbReference>
<dbReference type="PANTHER" id="PTHR22765:SF434">
    <property type="entry name" value="GB|AAD18119.1-RELATED"/>
    <property type="match status" value="1"/>
</dbReference>
<dbReference type="PANTHER" id="PTHR22765">
    <property type="entry name" value="RING FINGER AND PROTEASE ASSOCIATED DOMAIN-CONTAINING"/>
    <property type="match status" value="1"/>
</dbReference>
<dbReference type="Pfam" id="PF13639">
    <property type="entry name" value="zf-RING_2"/>
    <property type="match status" value="1"/>
</dbReference>
<dbReference type="SMART" id="SM00184">
    <property type="entry name" value="RING"/>
    <property type="match status" value="1"/>
</dbReference>
<dbReference type="SUPFAM" id="SSF57850">
    <property type="entry name" value="RING/U-box"/>
    <property type="match status" value="1"/>
</dbReference>
<dbReference type="PROSITE" id="PS50089">
    <property type="entry name" value="ZF_RING_2"/>
    <property type="match status" value="1"/>
</dbReference>